<accession>Q8TGT3</accession>
<accession>D6VWA6</accession>
<gene>
    <name type="ordered locus">YJL077W-B</name>
</gene>
<protein>
    <recommendedName>
        <fullName>Uncharacterized protein YJL077W-B</fullName>
    </recommendedName>
</protein>
<feature type="chain" id="PRO_0000245411" description="Uncharacterized protein YJL077W-B">
    <location>
        <begin position="1"/>
        <end position="32"/>
    </location>
</feature>
<name>YJ77B_YEAST</name>
<proteinExistence type="predicted"/>
<keyword id="KW-1185">Reference proteome</keyword>
<sequence length="32" mass="4015">MPILVWQLPKSKKLKTLKYRICFREFFDRVET</sequence>
<dbReference type="EMBL" id="X88851">
    <property type="status" value="NOT_ANNOTATED_CDS"/>
    <property type="molecule type" value="Genomic_DNA"/>
</dbReference>
<dbReference type="EMBL" id="Z49352">
    <property type="status" value="NOT_ANNOTATED_CDS"/>
    <property type="molecule type" value="Genomic_DNA"/>
</dbReference>
<dbReference type="EMBL" id="Z49353">
    <property type="status" value="NOT_ANNOTATED_CDS"/>
    <property type="molecule type" value="Genomic_DNA"/>
</dbReference>
<dbReference type="EMBL" id="AF479902">
    <property type="protein sequence ID" value="AAL79215.1"/>
    <property type="molecule type" value="Genomic_DNA"/>
</dbReference>
<dbReference type="EMBL" id="BK006943">
    <property type="protein sequence ID" value="DAA08722.1"/>
    <property type="molecule type" value="Genomic_DNA"/>
</dbReference>
<dbReference type="RefSeq" id="NP_878104.1">
    <property type="nucleotide sequence ID" value="NM_001184603.1"/>
</dbReference>
<dbReference type="BioGRID" id="37009">
    <property type="interactions" value="39"/>
</dbReference>
<dbReference type="FunCoup" id="Q8TGT3">
    <property type="interactions" value="25"/>
</dbReference>
<dbReference type="IntAct" id="Q8TGT3">
    <property type="interactions" value="1"/>
</dbReference>
<dbReference type="STRING" id="4932.YJL077W-B"/>
<dbReference type="PaxDb" id="4932-YJL077W-B"/>
<dbReference type="EnsemblFungi" id="YJL077W-B_mRNA">
    <property type="protein sequence ID" value="YJL077W-B"/>
    <property type="gene ID" value="YJL077W-B"/>
</dbReference>
<dbReference type="GeneID" id="1466467"/>
<dbReference type="KEGG" id="sce:YJL077W-B"/>
<dbReference type="AGR" id="SGD:S000028662"/>
<dbReference type="SGD" id="S000028662">
    <property type="gene designation" value="YJL077W-B"/>
</dbReference>
<dbReference type="VEuPathDB" id="FungiDB:YJL077W-B"/>
<dbReference type="HOGENOM" id="CLU_3392524_0_0_1"/>
<dbReference type="InParanoid" id="Q8TGT3"/>
<dbReference type="BioCyc" id="YEAST:G3O-31808-MONOMER"/>
<dbReference type="BioGRID-ORCS" id="1466467">
    <property type="hits" value="0 hits in 10 CRISPR screens"/>
</dbReference>
<dbReference type="PRO" id="PR:Q8TGT3"/>
<dbReference type="Proteomes" id="UP000002311">
    <property type="component" value="Chromosome X"/>
</dbReference>
<reference key="1">
    <citation type="journal article" date="1996" name="EMBO J.">
        <title>Complete nucleotide sequence of Saccharomyces cerevisiae chromosome X.</title>
        <authorList>
            <person name="Galibert F."/>
            <person name="Alexandraki D."/>
            <person name="Baur A."/>
            <person name="Boles E."/>
            <person name="Chalwatzis N."/>
            <person name="Chuat J.-C."/>
            <person name="Coster F."/>
            <person name="Cziepluch C."/>
            <person name="de Haan M."/>
            <person name="Domdey H."/>
            <person name="Durand P."/>
            <person name="Entian K.-D."/>
            <person name="Gatius M."/>
            <person name="Goffeau A."/>
            <person name="Grivell L.A."/>
            <person name="Hennemann A."/>
            <person name="Herbert C.J."/>
            <person name="Heumann K."/>
            <person name="Hilger F."/>
            <person name="Hollenberg C.P."/>
            <person name="Huang M.-E."/>
            <person name="Jacq C."/>
            <person name="Jauniaux J.-C."/>
            <person name="Katsoulou C."/>
            <person name="Kirchrath L."/>
            <person name="Kleine K."/>
            <person name="Kordes E."/>
            <person name="Koetter P."/>
            <person name="Liebl S."/>
            <person name="Louis E.J."/>
            <person name="Manus V."/>
            <person name="Mewes H.-W."/>
            <person name="Miosga T."/>
            <person name="Obermaier B."/>
            <person name="Perea J."/>
            <person name="Pohl T.M."/>
            <person name="Portetelle D."/>
            <person name="Pujol A."/>
            <person name="Purnelle B."/>
            <person name="Ramezani Rad M."/>
            <person name="Rasmussen S.W."/>
            <person name="Rose M."/>
            <person name="Rossau R."/>
            <person name="Schaaff-Gerstenschlaeger I."/>
            <person name="Smits P.H.M."/>
            <person name="Scarcez T."/>
            <person name="Soriano N."/>
            <person name="To Van D."/>
            <person name="Tzermia M."/>
            <person name="Van Broekhoven A."/>
            <person name="Vandenbol M."/>
            <person name="Wedler H."/>
            <person name="von Wettstein D."/>
            <person name="Wambutt R."/>
            <person name="Zagulski M."/>
            <person name="Zollner A."/>
            <person name="Karpfinger-Hartl L."/>
        </authorList>
    </citation>
    <scope>NUCLEOTIDE SEQUENCE [LARGE SCALE GENOMIC DNA]</scope>
    <source>
        <strain>ATCC 204508 / S288c</strain>
    </source>
</reference>
<reference key="2">
    <citation type="journal article" date="2014" name="G3 (Bethesda)">
        <title>The reference genome sequence of Saccharomyces cerevisiae: Then and now.</title>
        <authorList>
            <person name="Engel S.R."/>
            <person name="Dietrich F.S."/>
            <person name="Fisk D.G."/>
            <person name="Binkley G."/>
            <person name="Balakrishnan R."/>
            <person name="Costanzo M.C."/>
            <person name="Dwight S.S."/>
            <person name="Hitz B.C."/>
            <person name="Karra K."/>
            <person name="Nash R.S."/>
            <person name="Weng S."/>
            <person name="Wong E.D."/>
            <person name="Lloyd P."/>
            <person name="Skrzypek M.S."/>
            <person name="Miyasato S.R."/>
            <person name="Simison M."/>
            <person name="Cherry J.M."/>
        </authorList>
    </citation>
    <scope>GENOME REANNOTATION</scope>
    <source>
        <strain>ATCC 204508 / S288c</strain>
    </source>
</reference>
<reference key="3">
    <citation type="journal article" date="2002" name="Nat. Biotechnol.">
        <title>An integrated approach for finding overlooked genes in yeast.</title>
        <authorList>
            <person name="Kumar A."/>
            <person name="Harrison P.M."/>
            <person name="Cheung K.-H."/>
            <person name="Lan N."/>
            <person name="Echols N."/>
            <person name="Bertone P."/>
            <person name="Miller P."/>
            <person name="Gerstein M.B."/>
            <person name="Snyder M."/>
        </authorList>
    </citation>
    <scope>NUCLEOTIDE SEQUENCE [GENOMIC DNA]</scope>
</reference>
<organism>
    <name type="scientific">Saccharomyces cerevisiae (strain ATCC 204508 / S288c)</name>
    <name type="common">Baker's yeast</name>
    <dbReference type="NCBI Taxonomy" id="559292"/>
    <lineage>
        <taxon>Eukaryota</taxon>
        <taxon>Fungi</taxon>
        <taxon>Dikarya</taxon>
        <taxon>Ascomycota</taxon>
        <taxon>Saccharomycotina</taxon>
        <taxon>Saccharomycetes</taxon>
        <taxon>Saccharomycetales</taxon>
        <taxon>Saccharomycetaceae</taxon>
        <taxon>Saccharomyces</taxon>
    </lineage>
</organism>